<sequence length="217" mass="24412">MRLVLLGAPGAGKGTQAVVISQKYNVPHISTGDIFRSNIKNGTELGRKAKEYIDKGLLVPDELTVDIVKDRISQPDCKAGFILDGFPRTIYQAERLDEILKELNVELDCALNIYVPDEEIIKRMSGRRVCSKCGMSYHIVYNQPKVENICDSCNGELIQRDDDKEETVIQRLNTYHKQTEPLIEYYEKKGKLLTVHGQEGVDDTTKEVLNALSGVKL</sequence>
<organism>
    <name type="scientific">Acetivibrio thermocellus (strain ATCC 27405 / DSM 1237 / JCM 9322 / NBRC 103400 / NCIMB 10682 / NRRL B-4536 / VPI 7372)</name>
    <name type="common">Clostridium thermocellum</name>
    <dbReference type="NCBI Taxonomy" id="203119"/>
    <lineage>
        <taxon>Bacteria</taxon>
        <taxon>Bacillati</taxon>
        <taxon>Bacillota</taxon>
        <taxon>Clostridia</taxon>
        <taxon>Eubacteriales</taxon>
        <taxon>Oscillospiraceae</taxon>
        <taxon>Acetivibrio</taxon>
    </lineage>
</organism>
<feature type="chain" id="PRO_1000021725" description="Adenylate kinase">
    <location>
        <begin position="1"/>
        <end position="217"/>
    </location>
</feature>
<feature type="region of interest" description="NMP" evidence="1">
    <location>
        <begin position="30"/>
        <end position="59"/>
    </location>
</feature>
<feature type="region of interest" description="LID" evidence="1">
    <location>
        <begin position="126"/>
        <end position="163"/>
    </location>
</feature>
<feature type="binding site" evidence="1">
    <location>
        <begin position="10"/>
        <end position="15"/>
    </location>
    <ligand>
        <name>ATP</name>
        <dbReference type="ChEBI" id="CHEBI:30616"/>
    </ligand>
</feature>
<feature type="binding site" evidence="1">
    <location>
        <position position="31"/>
    </location>
    <ligand>
        <name>AMP</name>
        <dbReference type="ChEBI" id="CHEBI:456215"/>
    </ligand>
</feature>
<feature type="binding site" evidence="1">
    <location>
        <position position="36"/>
    </location>
    <ligand>
        <name>AMP</name>
        <dbReference type="ChEBI" id="CHEBI:456215"/>
    </ligand>
</feature>
<feature type="binding site" evidence="1">
    <location>
        <begin position="57"/>
        <end position="59"/>
    </location>
    <ligand>
        <name>AMP</name>
        <dbReference type="ChEBI" id="CHEBI:456215"/>
    </ligand>
</feature>
<feature type="binding site" evidence="1">
    <location>
        <begin position="85"/>
        <end position="88"/>
    </location>
    <ligand>
        <name>AMP</name>
        <dbReference type="ChEBI" id="CHEBI:456215"/>
    </ligand>
</feature>
<feature type="binding site" evidence="1">
    <location>
        <position position="92"/>
    </location>
    <ligand>
        <name>AMP</name>
        <dbReference type="ChEBI" id="CHEBI:456215"/>
    </ligand>
</feature>
<feature type="binding site" evidence="1">
    <location>
        <position position="127"/>
    </location>
    <ligand>
        <name>ATP</name>
        <dbReference type="ChEBI" id="CHEBI:30616"/>
    </ligand>
</feature>
<feature type="binding site" evidence="1">
    <location>
        <position position="130"/>
    </location>
    <ligand>
        <name>Zn(2+)</name>
        <dbReference type="ChEBI" id="CHEBI:29105"/>
        <note>structural</note>
    </ligand>
</feature>
<feature type="binding site" evidence="1">
    <location>
        <position position="133"/>
    </location>
    <ligand>
        <name>Zn(2+)</name>
        <dbReference type="ChEBI" id="CHEBI:29105"/>
        <note>structural</note>
    </ligand>
</feature>
<feature type="binding site" evidence="1">
    <location>
        <begin position="136"/>
        <end position="137"/>
    </location>
    <ligand>
        <name>ATP</name>
        <dbReference type="ChEBI" id="CHEBI:30616"/>
    </ligand>
</feature>
<feature type="binding site" evidence="1">
    <location>
        <position position="150"/>
    </location>
    <ligand>
        <name>Zn(2+)</name>
        <dbReference type="ChEBI" id="CHEBI:29105"/>
        <note>structural</note>
    </ligand>
</feature>
<feature type="binding site" evidence="1">
    <location>
        <position position="153"/>
    </location>
    <ligand>
        <name>Zn(2+)</name>
        <dbReference type="ChEBI" id="CHEBI:29105"/>
        <note>structural</note>
    </ligand>
</feature>
<feature type="binding site" evidence="1">
    <location>
        <position position="160"/>
    </location>
    <ligand>
        <name>AMP</name>
        <dbReference type="ChEBI" id="CHEBI:456215"/>
    </ligand>
</feature>
<feature type="binding site" evidence="1">
    <location>
        <position position="171"/>
    </location>
    <ligand>
        <name>AMP</name>
        <dbReference type="ChEBI" id="CHEBI:456215"/>
    </ligand>
</feature>
<feature type="binding site" evidence="1">
    <location>
        <position position="199"/>
    </location>
    <ligand>
        <name>ATP</name>
        <dbReference type="ChEBI" id="CHEBI:30616"/>
    </ligand>
</feature>
<protein>
    <recommendedName>
        <fullName evidence="1">Adenylate kinase</fullName>
        <shortName evidence="1">AK</shortName>
        <ecNumber evidence="1">2.7.4.3</ecNumber>
    </recommendedName>
    <alternativeName>
        <fullName evidence="1">ATP-AMP transphosphorylase</fullName>
    </alternativeName>
    <alternativeName>
        <fullName evidence="1">ATP:AMP phosphotransferase</fullName>
    </alternativeName>
    <alternativeName>
        <fullName evidence="1">Adenylate monophosphate kinase</fullName>
    </alternativeName>
</protein>
<accession>A3DJJ3</accession>
<evidence type="ECO:0000255" key="1">
    <source>
        <dbReference type="HAMAP-Rule" id="MF_00235"/>
    </source>
</evidence>
<dbReference type="EC" id="2.7.4.3" evidence="1"/>
<dbReference type="EMBL" id="CP000568">
    <property type="protein sequence ID" value="ABN54122.1"/>
    <property type="molecule type" value="Genomic_DNA"/>
</dbReference>
<dbReference type="RefSeq" id="WP_003518549.1">
    <property type="nucleotide sequence ID" value="NC_009012.1"/>
</dbReference>
<dbReference type="SMR" id="A3DJJ3"/>
<dbReference type="STRING" id="203119.Cthe_2924"/>
<dbReference type="GeneID" id="35805528"/>
<dbReference type="KEGG" id="cth:Cthe_2924"/>
<dbReference type="eggNOG" id="COG0563">
    <property type="taxonomic scope" value="Bacteria"/>
</dbReference>
<dbReference type="HOGENOM" id="CLU_032354_1_2_9"/>
<dbReference type="OrthoDB" id="9805030at2"/>
<dbReference type="UniPathway" id="UPA00588">
    <property type="reaction ID" value="UER00649"/>
</dbReference>
<dbReference type="Proteomes" id="UP000002145">
    <property type="component" value="Chromosome"/>
</dbReference>
<dbReference type="GO" id="GO:0005737">
    <property type="term" value="C:cytoplasm"/>
    <property type="evidence" value="ECO:0007669"/>
    <property type="project" value="UniProtKB-SubCell"/>
</dbReference>
<dbReference type="GO" id="GO:0004017">
    <property type="term" value="F:adenylate kinase activity"/>
    <property type="evidence" value="ECO:0007669"/>
    <property type="project" value="UniProtKB-UniRule"/>
</dbReference>
<dbReference type="GO" id="GO:0005524">
    <property type="term" value="F:ATP binding"/>
    <property type="evidence" value="ECO:0007669"/>
    <property type="project" value="UniProtKB-UniRule"/>
</dbReference>
<dbReference type="GO" id="GO:0008270">
    <property type="term" value="F:zinc ion binding"/>
    <property type="evidence" value="ECO:0007669"/>
    <property type="project" value="UniProtKB-UniRule"/>
</dbReference>
<dbReference type="GO" id="GO:0044209">
    <property type="term" value="P:AMP salvage"/>
    <property type="evidence" value="ECO:0007669"/>
    <property type="project" value="UniProtKB-UniRule"/>
</dbReference>
<dbReference type="CDD" id="cd01428">
    <property type="entry name" value="ADK"/>
    <property type="match status" value="1"/>
</dbReference>
<dbReference type="FunFam" id="3.40.50.300:FF:000106">
    <property type="entry name" value="Adenylate kinase mitochondrial"/>
    <property type="match status" value="1"/>
</dbReference>
<dbReference type="Gene3D" id="3.40.50.300">
    <property type="entry name" value="P-loop containing nucleotide triphosphate hydrolases"/>
    <property type="match status" value="1"/>
</dbReference>
<dbReference type="HAMAP" id="MF_00235">
    <property type="entry name" value="Adenylate_kinase_Adk"/>
    <property type="match status" value="1"/>
</dbReference>
<dbReference type="InterPro" id="IPR006259">
    <property type="entry name" value="Adenyl_kin_sub"/>
</dbReference>
<dbReference type="InterPro" id="IPR000850">
    <property type="entry name" value="Adenylat/UMP-CMP_kin"/>
</dbReference>
<dbReference type="InterPro" id="IPR033690">
    <property type="entry name" value="Adenylat_kinase_CS"/>
</dbReference>
<dbReference type="InterPro" id="IPR007862">
    <property type="entry name" value="Adenylate_kinase_lid-dom"/>
</dbReference>
<dbReference type="InterPro" id="IPR027417">
    <property type="entry name" value="P-loop_NTPase"/>
</dbReference>
<dbReference type="NCBIfam" id="TIGR01351">
    <property type="entry name" value="adk"/>
    <property type="match status" value="1"/>
</dbReference>
<dbReference type="NCBIfam" id="NF001379">
    <property type="entry name" value="PRK00279.1-1"/>
    <property type="match status" value="1"/>
</dbReference>
<dbReference type="NCBIfam" id="NF001380">
    <property type="entry name" value="PRK00279.1-2"/>
    <property type="match status" value="1"/>
</dbReference>
<dbReference type="NCBIfam" id="NF001381">
    <property type="entry name" value="PRK00279.1-3"/>
    <property type="match status" value="1"/>
</dbReference>
<dbReference type="NCBIfam" id="NF011100">
    <property type="entry name" value="PRK14527.1"/>
    <property type="match status" value="1"/>
</dbReference>
<dbReference type="PANTHER" id="PTHR23359">
    <property type="entry name" value="NUCLEOTIDE KINASE"/>
    <property type="match status" value="1"/>
</dbReference>
<dbReference type="Pfam" id="PF00406">
    <property type="entry name" value="ADK"/>
    <property type="match status" value="1"/>
</dbReference>
<dbReference type="Pfam" id="PF05191">
    <property type="entry name" value="ADK_lid"/>
    <property type="match status" value="1"/>
</dbReference>
<dbReference type="PRINTS" id="PR00094">
    <property type="entry name" value="ADENYLTKNASE"/>
</dbReference>
<dbReference type="SUPFAM" id="SSF52540">
    <property type="entry name" value="P-loop containing nucleoside triphosphate hydrolases"/>
    <property type="match status" value="1"/>
</dbReference>
<dbReference type="PROSITE" id="PS00113">
    <property type="entry name" value="ADENYLATE_KINASE"/>
    <property type="match status" value="1"/>
</dbReference>
<name>KAD_ACET2</name>
<comment type="function">
    <text evidence="1">Catalyzes the reversible transfer of the terminal phosphate group between ATP and AMP. Plays an important role in cellular energy homeostasis and in adenine nucleotide metabolism.</text>
</comment>
<comment type="catalytic activity">
    <reaction evidence="1">
        <text>AMP + ATP = 2 ADP</text>
        <dbReference type="Rhea" id="RHEA:12973"/>
        <dbReference type="ChEBI" id="CHEBI:30616"/>
        <dbReference type="ChEBI" id="CHEBI:456215"/>
        <dbReference type="ChEBI" id="CHEBI:456216"/>
        <dbReference type="EC" id="2.7.4.3"/>
    </reaction>
</comment>
<comment type="pathway">
    <text evidence="1">Purine metabolism; AMP biosynthesis via salvage pathway; AMP from ADP: step 1/1.</text>
</comment>
<comment type="subunit">
    <text evidence="1">Monomer.</text>
</comment>
<comment type="subcellular location">
    <subcellularLocation>
        <location evidence="1">Cytoplasm</location>
    </subcellularLocation>
</comment>
<comment type="domain">
    <text evidence="1">Consists of three domains, a large central CORE domain and two small peripheral domains, NMPbind and LID, which undergo movements during catalysis. The LID domain closes over the site of phosphoryl transfer upon ATP binding. Assembling and dissambling the active center during each catalytic cycle provides an effective means to prevent ATP hydrolysis. Some bacteria have evolved a zinc-coordinating structure that stabilizes the LID domain.</text>
</comment>
<comment type="similarity">
    <text evidence="1">Belongs to the adenylate kinase family.</text>
</comment>
<keyword id="KW-0067">ATP-binding</keyword>
<keyword id="KW-0963">Cytoplasm</keyword>
<keyword id="KW-0418">Kinase</keyword>
<keyword id="KW-0479">Metal-binding</keyword>
<keyword id="KW-0545">Nucleotide biosynthesis</keyword>
<keyword id="KW-0547">Nucleotide-binding</keyword>
<keyword id="KW-1185">Reference proteome</keyword>
<keyword id="KW-0808">Transferase</keyword>
<keyword id="KW-0862">Zinc</keyword>
<gene>
    <name evidence="1" type="primary">adk</name>
    <name type="ordered locus">Cthe_2924</name>
</gene>
<proteinExistence type="inferred from homology"/>
<reference key="1">
    <citation type="submission" date="2007-02" db="EMBL/GenBank/DDBJ databases">
        <title>Complete sequence of Clostridium thermocellum ATCC 27405.</title>
        <authorList>
            <consortium name="US DOE Joint Genome Institute"/>
            <person name="Copeland A."/>
            <person name="Lucas S."/>
            <person name="Lapidus A."/>
            <person name="Barry K."/>
            <person name="Detter J.C."/>
            <person name="Glavina del Rio T."/>
            <person name="Hammon N."/>
            <person name="Israni S."/>
            <person name="Dalin E."/>
            <person name="Tice H."/>
            <person name="Pitluck S."/>
            <person name="Chertkov O."/>
            <person name="Brettin T."/>
            <person name="Bruce D."/>
            <person name="Han C."/>
            <person name="Tapia R."/>
            <person name="Gilna P."/>
            <person name="Schmutz J."/>
            <person name="Larimer F."/>
            <person name="Land M."/>
            <person name="Hauser L."/>
            <person name="Kyrpides N."/>
            <person name="Mikhailova N."/>
            <person name="Wu J.H.D."/>
            <person name="Newcomb M."/>
            <person name="Richardson P."/>
        </authorList>
    </citation>
    <scope>NUCLEOTIDE SEQUENCE [LARGE SCALE GENOMIC DNA]</scope>
    <source>
        <strain>ATCC 27405 / DSM 1237 / JCM 9322 / NBRC 103400 / NCIMB 10682 / NRRL B-4536 / VPI 7372</strain>
    </source>
</reference>